<name>NUOI_SHEON</name>
<keyword id="KW-0004">4Fe-4S</keyword>
<keyword id="KW-0997">Cell inner membrane</keyword>
<keyword id="KW-1003">Cell membrane</keyword>
<keyword id="KW-0408">Iron</keyword>
<keyword id="KW-0411">Iron-sulfur</keyword>
<keyword id="KW-0472">Membrane</keyword>
<keyword id="KW-0479">Metal-binding</keyword>
<keyword id="KW-0520">NAD</keyword>
<keyword id="KW-0874">Quinone</keyword>
<keyword id="KW-1185">Reference proteome</keyword>
<keyword id="KW-0677">Repeat</keyword>
<keyword id="KW-1278">Translocase</keyword>
<keyword id="KW-0830">Ubiquinone</keyword>
<sequence length="180" mass="20484">MKILRIIQGVGTQLRSLSMVFSHAWHPRETLNYPEEAVYAAPRYRGRIVLTRDPDGDERCVACNLCAVACPVGCISLQKSERDDGRWYPEFFRINFSRCIFCGLCEEACPTTAIQLTPDFEMGEYRRQDLVYEKEDLLISGPGKYPDYNFYRMSGMAIDGKPKGDAENEAKPIDVKSLLP</sequence>
<protein>
    <recommendedName>
        <fullName evidence="1">NADH-quinone oxidoreductase subunit I</fullName>
        <ecNumber evidence="1">7.1.1.-</ecNumber>
    </recommendedName>
    <alternativeName>
        <fullName evidence="1">NADH dehydrogenase I subunit I</fullName>
    </alternativeName>
    <alternativeName>
        <fullName evidence="1">NDH-1 subunit I</fullName>
    </alternativeName>
</protein>
<reference key="1">
    <citation type="journal article" date="2002" name="Nat. Biotechnol.">
        <title>Genome sequence of the dissimilatory metal ion-reducing bacterium Shewanella oneidensis.</title>
        <authorList>
            <person name="Heidelberg J.F."/>
            <person name="Paulsen I.T."/>
            <person name="Nelson K.E."/>
            <person name="Gaidos E.J."/>
            <person name="Nelson W.C."/>
            <person name="Read T.D."/>
            <person name="Eisen J.A."/>
            <person name="Seshadri R."/>
            <person name="Ward N.L."/>
            <person name="Methe B.A."/>
            <person name="Clayton R.A."/>
            <person name="Meyer T."/>
            <person name="Tsapin A."/>
            <person name="Scott J."/>
            <person name="Beanan M.J."/>
            <person name="Brinkac L.M."/>
            <person name="Daugherty S.C."/>
            <person name="DeBoy R.T."/>
            <person name="Dodson R.J."/>
            <person name="Durkin A.S."/>
            <person name="Haft D.H."/>
            <person name="Kolonay J.F."/>
            <person name="Madupu R."/>
            <person name="Peterson J.D."/>
            <person name="Umayam L.A."/>
            <person name="White O."/>
            <person name="Wolf A.M."/>
            <person name="Vamathevan J.J."/>
            <person name="Weidman J.F."/>
            <person name="Impraim M."/>
            <person name="Lee K."/>
            <person name="Berry K.J."/>
            <person name="Lee C."/>
            <person name="Mueller J."/>
            <person name="Khouri H.M."/>
            <person name="Gill J."/>
            <person name="Utterback T.R."/>
            <person name="McDonald L.A."/>
            <person name="Feldblyum T.V."/>
            <person name="Smith H.O."/>
            <person name="Venter J.C."/>
            <person name="Nealson K.H."/>
            <person name="Fraser C.M."/>
        </authorList>
    </citation>
    <scope>NUCLEOTIDE SEQUENCE [LARGE SCALE GENOMIC DNA]</scope>
    <source>
        <strain>ATCC 700550 / JCM 31522 / CIP 106686 / LMG 19005 / NCIMB 14063 / MR-1</strain>
    </source>
</reference>
<comment type="function">
    <text evidence="1">NDH-1 shuttles electrons from NADH, via FMN and iron-sulfur (Fe-S) centers, to quinones in the respiratory chain. The immediate electron acceptor for the enzyme in this species is believed to be ubiquinone. Couples the redox reaction to proton translocation (for every two electrons transferred, four hydrogen ions are translocated across the cytoplasmic membrane), and thus conserves the redox energy in a proton gradient.</text>
</comment>
<comment type="catalytic activity">
    <reaction evidence="1">
        <text>a quinone + NADH + 5 H(+)(in) = a quinol + NAD(+) + 4 H(+)(out)</text>
        <dbReference type="Rhea" id="RHEA:57888"/>
        <dbReference type="ChEBI" id="CHEBI:15378"/>
        <dbReference type="ChEBI" id="CHEBI:24646"/>
        <dbReference type="ChEBI" id="CHEBI:57540"/>
        <dbReference type="ChEBI" id="CHEBI:57945"/>
        <dbReference type="ChEBI" id="CHEBI:132124"/>
    </reaction>
</comment>
<comment type="cofactor">
    <cofactor evidence="1">
        <name>[4Fe-4S] cluster</name>
        <dbReference type="ChEBI" id="CHEBI:49883"/>
    </cofactor>
    <text evidence="1">Binds 2 [4Fe-4S] clusters per subunit.</text>
</comment>
<comment type="subunit">
    <text evidence="1">NDH-1 is composed of 13 different subunits. Subunits NuoA, H, J, K, L, M, N constitute the membrane sector of the complex.</text>
</comment>
<comment type="subcellular location">
    <subcellularLocation>
        <location evidence="1">Cell inner membrane</location>
        <topology evidence="1">Peripheral membrane protein</topology>
    </subcellularLocation>
</comment>
<comment type="similarity">
    <text evidence="1">Belongs to the complex I 23 kDa subunit family.</text>
</comment>
<accession>Q8EI36</accession>
<feature type="chain" id="PRO_0000245745" description="NADH-quinone oxidoreductase subunit I">
    <location>
        <begin position="1"/>
        <end position="180"/>
    </location>
</feature>
<feature type="domain" description="4Fe-4S ferredoxin-type 1" evidence="1">
    <location>
        <begin position="48"/>
        <end position="80"/>
    </location>
</feature>
<feature type="domain" description="4Fe-4S ferredoxin-type 2" evidence="1">
    <location>
        <begin position="90"/>
        <end position="119"/>
    </location>
</feature>
<feature type="region of interest" description="Disordered" evidence="2">
    <location>
        <begin position="161"/>
        <end position="180"/>
    </location>
</feature>
<feature type="compositionally biased region" description="Basic and acidic residues" evidence="2">
    <location>
        <begin position="161"/>
        <end position="174"/>
    </location>
</feature>
<feature type="binding site" evidence="1">
    <location>
        <position position="60"/>
    </location>
    <ligand>
        <name>[4Fe-4S] cluster</name>
        <dbReference type="ChEBI" id="CHEBI:49883"/>
        <label>1</label>
    </ligand>
</feature>
<feature type="binding site" evidence="1">
    <location>
        <position position="63"/>
    </location>
    <ligand>
        <name>[4Fe-4S] cluster</name>
        <dbReference type="ChEBI" id="CHEBI:49883"/>
        <label>1</label>
    </ligand>
</feature>
<feature type="binding site" evidence="1">
    <location>
        <position position="66"/>
    </location>
    <ligand>
        <name>[4Fe-4S] cluster</name>
        <dbReference type="ChEBI" id="CHEBI:49883"/>
        <label>1</label>
    </ligand>
</feature>
<feature type="binding site" evidence="1">
    <location>
        <position position="70"/>
    </location>
    <ligand>
        <name>[4Fe-4S] cluster</name>
        <dbReference type="ChEBI" id="CHEBI:49883"/>
        <label>2</label>
    </ligand>
</feature>
<feature type="binding site" evidence="1">
    <location>
        <position position="99"/>
    </location>
    <ligand>
        <name>[4Fe-4S] cluster</name>
        <dbReference type="ChEBI" id="CHEBI:49883"/>
        <label>2</label>
    </ligand>
</feature>
<feature type="binding site" evidence="1">
    <location>
        <position position="102"/>
    </location>
    <ligand>
        <name>[4Fe-4S] cluster</name>
        <dbReference type="ChEBI" id="CHEBI:49883"/>
        <label>2</label>
    </ligand>
</feature>
<feature type="binding site" evidence="1">
    <location>
        <position position="105"/>
    </location>
    <ligand>
        <name>[4Fe-4S] cluster</name>
        <dbReference type="ChEBI" id="CHEBI:49883"/>
        <label>2</label>
    </ligand>
</feature>
<feature type="binding site" evidence="1">
    <location>
        <position position="109"/>
    </location>
    <ligand>
        <name>[4Fe-4S] cluster</name>
        <dbReference type="ChEBI" id="CHEBI:49883"/>
        <label>1</label>
    </ligand>
</feature>
<dbReference type="EC" id="7.1.1.-" evidence="1"/>
<dbReference type="EMBL" id="AE014299">
    <property type="protein sequence ID" value="AAN54087.1"/>
    <property type="molecule type" value="Genomic_DNA"/>
</dbReference>
<dbReference type="RefSeq" id="NP_716642.1">
    <property type="nucleotide sequence ID" value="NC_004347.2"/>
</dbReference>
<dbReference type="RefSeq" id="WP_011071279.1">
    <property type="nucleotide sequence ID" value="NC_004347.2"/>
</dbReference>
<dbReference type="SMR" id="Q8EI36"/>
<dbReference type="STRING" id="211586.SO_1014"/>
<dbReference type="PaxDb" id="211586-SO_1014"/>
<dbReference type="KEGG" id="son:SO_1014"/>
<dbReference type="PATRIC" id="fig|211586.12.peg.970"/>
<dbReference type="eggNOG" id="COG1143">
    <property type="taxonomic scope" value="Bacteria"/>
</dbReference>
<dbReference type="HOGENOM" id="CLU_067218_4_3_6"/>
<dbReference type="OrthoDB" id="9808559at2"/>
<dbReference type="PhylomeDB" id="Q8EI36"/>
<dbReference type="BioCyc" id="SONE211586:G1GMP-940-MONOMER"/>
<dbReference type="Proteomes" id="UP000008186">
    <property type="component" value="Chromosome"/>
</dbReference>
<dbReference type="GO" id="GO:0005886">
    <property type="term" value="C:plasma membrane"/>
    <property type="evidence" value="ECO:0007669"/>
    <property type="project" value="UniProtKB-SubCell"/>
</dbReference>
<dbReference type="GO" id="GO:0045271">
    <property type="term" value="C:respiratory chain complex I"/>
    <property type="evidence" value="ECO:0000318"/>
    <property type="project" value="GO_Central"/>
</dbReference>
<dbReference type="GO" id="GO:0051539">
    <property type="term" value="F:4 iron, 4 sulfur cluster binding"/>
    <property type="evidence" value="ECO:0007669"/>
    <property type="project" value="UniProtKB-KW"/>
</dbReference>
<dbReference type="GO" id="GO:0005506">
    <property type="term" value="F:iron ion binding"/>
    <property type="evidence" value="ECO:0007669"/>
    <property type="project" value="UniProtKB-UniRule"/>
</dbReference>
<dbReference type="GO" id="GO:0050136">
    <property type="term" value="F:NADH:ubiquinone reductase (non-electrogenic) activity"/>
    <property type="evidence" value="ECO:0007669"/>
    <property type="project" value="UniProtKB-UniRule"/>
</dbReference>
<dbReference type="GO" id="GO:0048038">
    <property type="term" value="F:quinone binding"/>
    <property type="evidence" value="ECO:0007669"/>
    <property type="project" value="UniProtKB-KW"/>
</dbReference>
<dbReference type="GO" id="GO:0009060">
    <property type="term" value="P:aerobic respiration"/>
    <property type="evidence" value="ECO:0000318"/>
    <property type="project" value="GO_Central"/>
</dbReference>
<dbReference type="FunFam" id="3.30.70.3270:FF:000002">
    <property type="entry name" value="NADH-quinone oxidoreductase subunit I"/>
    <property type="match status" value="1"/>
</dbReference>
<dbReference type="Gene3D" id="3.30.70.3270">
    <property type="match status" value="1"/>
</dbReference>
<dbReference type="HAMAP" id="MF_01351">
    <property type="entry name" value="NDH1_NuoI"/>
    <property type="match status" value="1"/>
</dbReference>
<dbReference type="InterPro" id="IPR017896">
    <property type="entry name" value="4Fe4S_Fe-S-bd"/>
</dbReference>
<dbReference type="InterPro" id="IPR017900">
    <property type="entry name" value="4Fe4S_Fe_S_CS"/>
</dbReference>
<dbReference type="InterPro" id="IPR010226">
    <property type="entry name" value="NADH_quinone_OxRdtase_chainI"/>
</dbReference>
<dbReference type="NCBIfam" id="TIGR01971">
    <property type="entry name" value="NuoI"/>
    <property type="match status" value="1"/>
</dbReference>
<dbReference type="NCBIfam" id="NF004536">
    <property type="entry name" value="PRK05888.1-1"/>
    <property type="match status" value="1"/>
</dbReference>
<dbReference type="PANTHER" id="PTHR10849:SF20">
    <property type="entry name" value="NADH DEHYDROGENASE [UBIQUINONE] IRON-SULFUR PROTEIN 8, MITOCHONDRIAL"/>
    <property type="match status" value="1"/>
</dbReference>
<dbReference type="PANTHER" id="PTHR10849">
    <property type="entry name" value="NADH DEHYDROGENASE UBIQUINONE IRON-SULFUR PROTEIN 8, MITOCHONDRIAL"/>
    <property type="match status" value="1"/>
</dbReference>
<dbReference type="Pfam" id="PF12838">
    <property type="entry name" value="Fer4_7"/>
    <property type="match status" value="1"/>
</dbReference>
<dbReference type="SUPFAM" id="SSF54862">
    <property type="entry name" value="4Fe-4S ferredoxins"/>
    <property type="match status" value="1"/>
</dbReference>
<dbReference type="PROSITE" id="PS00198">
    <property type="entry name" value="4FE4S_FER_1"/>
    <property type="match status" value="2"/>
</dbReference>
<dbReference type="PROSITE" id="PS51379">
    <property type="entry name" value="4FE4S_FER_2"/>
    <property type="match status" value="2"/>
</dbReference>
<evidence type="ECO:0000255" key="1">
    <source>
        <dbReference type="HAMAP-Rule" id="MF_01351"/>
    </source>
</evidence>
<evidence type="ECO:0000256" key="2">
    <source>
        <dbReference type="SAM" id="MobiDB-lite"/>
    </source>
</evidence>
<gene>
    <name evidence="1" type="primary">nuoI</name>
    <name type="ordered locus">SO_1014</name>
</gene>
<proteinExistence type="inferred from homology"/>
<organism>
    <name type="scientific">Shewanella oneidensis (strain ATCC 700550 / JCM 31522 / CIP 106686 / LMG 19005 / NCIMB 14063 / MR-1)</name>
    <dbReference type="NCBI Taxonomy" id="211586"/>
    <lineage>
        <taxon>Bacteria</taxon>
        <taxon>Pseudomonadati</taxon>
        <taxon>Pseudomonadota</taxon>
        <taxon>Gammaproteobacteria</taxon>
        <taxon>Alteromonadales</taxon>
        <taxon>Shewanellaceae</taxon>
        <taxon>Shewanella</taxon>
    </lineage>
</organism>